<dbReference type="EMBL" id="KE138836">
    <property type="protein sequence ID" value="EPT27110.1"/>
    <property type="molecule type" value="Genomic_DNA"/>
</dbReference>
<dbReference type="RefSeq" id="XP_002366269.1">
    <property type="nucleotide sequence ID" value="XM_002366228.2"/>
</dbReference>
<dbReference type="EnsemblProtists" id="TGME49_226060-t26_1">
    <property type="protein sequence ID" value="TGME49_226060-t26_1"/>
    <property type="gene ID" value="TGME49_226060"/>
</dbReference>
<dbReference type="GeneID" id="7897415"/>
<dbReference type="KEGG" id="tgo:TGME49_226060"/>
<dbReference type="VEuPathDB" id="ToxoDB:TGME49_226060"/>
<dbReference type="HOGENOM" id="CLU_385678_0_0_1"/>
<dbReference type="OrthoDB" id="438545at2759"/>
<dbReference type="Proteomes" id="UP000001529">
    <property type="component" value="Chromosome X"/>
</dbReference>
<dbReference type="GO" id="GO:0005774">
    <property type="term" value="C:vacuolar membrane"/>
    <property type="evidence" value="ECO:0007669"/>
    <property type="project" value="UniProtKB-SubCell"/>
</dbReference>
<dbReference type="GO" id="GO:0015179">
    <property type="term" value="F:L-amino acid transmembrane transporter activity"/>
    <property type="evidence" value="ECO:0007669"/>
    <property type="project" value="TreeGrafter"/>
</dbReference>
<dbReference type="InterPro" id="IPR013057">
    <property type="entry name" value="AA_transpt_TM"/>
</dbReference>
<dbReference type="PANTHER" id="PTHR22950">
    <property type="entry name" value="AMINO ACID TRANSPORTER"/>
    <property type="match status" value="1"/>
</dbReference>
<dbReference type="Pfam" id="PF01490">
    <property type="entry name" value="Aa_trans"/>
    <property type="match status" value="1"/>
</dbReference>
<accession>S8G5X3</accession>
<reference evidence="7" key="1">
    <citation type="submission" date="2013-04" db="EMBL/GenBank/DDBJ databases">
        <authorList>
            <person name="Sibley D."/>
            <person name="Venepally P."/>
            <person name="Karamycheva S."/>
            <person name="Hadjithomas M."/>
            <person name="Khan A."/>
            <person name="Brunk B."/>
            <person name="Roos D."/>
            <person name="Caler E."/>
            <person name="Lorenzi H."/>
        </authorList>
    </citation>
    <scope>NUCLEOTIDE SEQUENCE [LARGE SCALE GENOMIC DNA]</scope>
    <source>
        <strain evidence="7">ATCC 50611 / Me49</strain>
    </source>
</reference>
<reference evidence="5" key="2">
    <citation type="journal article" date="2023" name="MSphere">
        <title>A Toxoplasma gondii putative amino acid transporter localizes to the plant-like vacuolar compartment and controls parasite extracellular survival and stage differentiation.</title>
        <authorList>
            <person name="Piro F."/>
            <person name="Masci S."/>
            <person name="Kannan G."/>
            <person name="Focaia R."/>
            <person name="Schultz T.L."/>
            <person name="Thaprawat P."/>
            <person name="Carruthers V.B."/>
            <person name="Di Cristina M."/>
        </authorList>
    </citation>
    <scope>FUNCTION</scope>
    <scope>SUBCELLULAR LOCATION</scope>
    <scope>DEVELOPMENTAL STAGE</scope>
    <scope>DISRUPTION PHENOTYPE</scope>
</reference>
<comment type="function">
    <text evidence="3">Putative amino acid transporter (PubMed:38051073). Probably transports arginine (PubMed:38051073). Involved in maintaining the osmotic homeostasis of the digestive vacuole (PubMed:38051073). Required for extracellular parasite survival and bradyzoite differentiation (PubMed:38051073).</text>
</comment>
<comment type="subcellular location">
    <subcellularLocation>
        <location evidence="3">Vacuole membrane</location>
        <topology evidence="1">Multi-pass membrane protein</topology>
    </subcellularLocation>
</comment>
<comment type="developmental stage">
    <text evidence="3">Expressed in bradyzoites (PubMed:38051073). Expressed at low levels in tachyzoites (PubMed:38051073).</text>
</comment>
<comment type="disruption phenotype">
    <text evidence="3">Reduced survival of extracellular parasites (PubMed:38051073). Altered morphology in bradyzoites (PubMed:38051073). Increased cyst burden in chronically infected mice (PubMed:38051073). Unstable inter-conversion between tachyzoites and bradyzoites (PubMed:38051073).</text>
</comment>
<comment type="similarity">
    <text evidence="5">Belongs to the amino acid/polyamine transporter 2 family.</text>
</comment>
<sequence>MREGAFDASRKKGGTQRPSSLSTAQPPSDSRPPSSSSPPSSSSSSSSASSSSPSHPPRPFPSASSPWFPTCEASAEKMDRAQTDSRQEPILRPVAAGEEASPAFVPWQTRAFSPIARGSLRGSVLTLASSCLGAGVLATPYAMQETGLLIGLSLLCMHTFVSFFTTYILMASSKFFGSSTYAELAHRASPRLPRRAVDAIIVLNGLGVCLSFLVFLGDFLPASLENLQLFPRATDHRAALLCASMVVIFPLSVQPRLSALRHFAFFPVCALLFSLSCVVYRSLHLLREQTAPIRLVNLNWNFFKSFNVFLFAFMQHINVCPIGRELQNPTDPRVYKVSLRAALLEYCLYTPIATLGYLSFRGVTKQNFMLNYSSEDQLMHVCTLLLSFSMVLGVPLTLIPTVDSMFSLLRSLAPAPRRAARAALGEAPRRRSLVAPLLHAERTDGLVRVTVSLAFEKEGGLGDAEYGGAEAGEATRGCGEGVESPGEVQPEQADAGARNRDRSRLHADSERSAGDREGSQAEEEREEERSGEERSVVTATQASRCEGSSSASSRSVDSGSGGCQDACESRETRTRFLALEEEPSGDREAREEREEREEREGQGRRGGELLLLMGRVLENRKVCVAACLLPVLLLALVLDKAADVVGLLGGFFSTLLMSALPSIIFYAGIGNLYYRPFTRSLLMVFLLGVTCVGAFSSVIIILQTFNVCCQVPRSVLH</sequence>
<proteinExistence type="evidence at transcript level"/>
<gene>
    <name evidence="4" type="primary">AAT1</name>
    <name evidence="6" type="ORF">TGME49_226060</name>
</gene>
<keyword id="KW-0029">Amino-acid transport</keyword>
<keyword id="KW-0472">Membrane</keyword>
<keyword id="KW-1185">Reference proteome</keyword>
<keyword id="KW-0812">Transmembrane</keyword>
<keyword id="KW-1133">Transmembrane helix</keyword>
<keyword id="KW-0813">Transport</keyword>
<keyword id="KW-0926">Vacuole</keyword>
<organism evidence="7">
    <name type="scientific">Toxoplasma gondii (strain ATCC 50611 / Me49)</name>
    <dbReference type="NCBI Taxonomy" id="508771"/>
    <lineage>
        <taxon>Eukaryota</taxon>
        <taxon>Sar</taxon>
        <taxon>Alveolata</taxon>
        <taxon>Apicomplexa</taxon>
        <taxon>Conoidasida</taxon>
        <taxon>Coccidia</taxon>
        <taxon>Eucoccidiorida</taxon>
        <taxon>Eimeriorina</taxon>
        <taxon>Sarcocystidae</taxon>
        <taxon>Toxoplasma</taxon>
    </lineage>
</organism>
<protein>
    <recommendedName>
        <fullName evidence="5">Putative amino acid transporter AAT1</fullName>
        <shortName evidence="4">TgAAT1</shortName>
    </recommendedName>
</protein>
<feature type="chain" id="PRO_0000460348" description="Putative amino acid transporter AAT1">
    <location>
        <begin position="1"/>
        <end position="717"/>
    </location>
</feature>
<feature type="transmembrane region" description="Helical" evidence="1">
    <location>
        <begin position="124"/>
        <end position="143"/>
    </location>
</feature>
<feature type="transmembrane region" description="Helical" evidence="1">
    <location>
        <begin position="149"/>
        <end position="170"/>
    </location>
</feature>
<feature type="transmembrane region" description="Helical" evidence="1">
    <location>
        <begin position="196"/>
        <end position="216"/>
    </location>
</feature>
<feature type="transmembrane region" description="Helical" evidence="1">
    <location>
        <begin position="236"/>
        <end position="253"/>
    </location>
</feature>
<feature type="transmembrane region" description="Helical" evidence="1">
    <location>
        <begin position="265"/>
        <end position="283"/>
    </location>
</feature>
<feature type="transmembrane region" description="Helical" evidence="1">
    <location>
        <begin position="303"/>
        <end position="320"/>
    </location>
</feature>
<feature type="transmembrane region" description="Helical" evidence="1">
    <location>
        <begin position="341"/>
        <end position="358"/>
    </location>
</feature>
<feature type="transmembrane region" description="Helical" evidence="1">
    <location>
        <begin position="378"/>
        <end position="402"/>
    </location>
</feature>
<feature type="transmembrane region" description="Helical" evidence="1">
    <location>
        <begin position="622"/>
        <end position="638"/>
    </location>
</feature>
<feature type="transmembrane region" description="Helical" evidence="1">
    <location>
        <begin position="644"/>
        <end position="669"/>
    </location>
</feature>
<feature type="transmembrane region" description="Helical" evidence="1">
    <location>
        <begin position="681"/>
        <end position="702"/>
    </location>
</feature>
<feature type="region of interest" description="Disordered" evidence="2">
    <location>
        <begin position="1"/>
        <end position="88"/>
    </location>
</feature>
<feature type="region of interest" description="Disordered" evidence="2">
    <location>
        <begin position="462"/>
        <end position="602"/>
    </location>
</feature>
<feature type="compositionally biased region" description="Basic and acidic residues" evidence="2">
    <location>
        <begin position="1"/>
        <end position="10"/>
    </location>
</feature>
<feature type="compositionally biased region" description="Polar residues" evidence="2">
    <location>
        <begin position="16"/>
        <end position="25"/>
    </location>
</feature>
<feature type="compositionally biased region" description="Low complexity" evidence="2">
    <location>
        <begin position="26"/>
        <end position="53"/>
    </location>
</feature>
<feature type="compositionally biased region" description="Basic and acidic residues" evidence="2">
    <location>
        <begin position="74"/>
        <end position="88"/>
    </location>
</feature>
<feature type="compositionally biased region" description="Low complexity" evidence="2">
    <location>
        <begin position="463"/>
        <end position="477"/>
    </location>
</feature>
<feature type="compositionally biased region" description="Basic and acidic residues" evidence="2">
    <location>
        <begin position="497"/>
        <end position="519"/>
    </location>
</feature>
<feature type="compositionally biased region" description="Low complexity" evidence="2">
    <location>
        <begin position="547"/>
        <end position="558"/>
    </location>
</feature>
<feature type="compositionally biased region" description="Basic and acidic residues" evidence="2">
    <location>
        <begin position="584"/>
        <end position="602"/>
    </location>
</feature>
<evidence type="ECO:0000255" key="1"/>
<evidence type="ECO:0000256" key="2">
    <source>
        <dbReference type="SAM" id="MobiDB-lite"/>
    </source>
</evidence>
<evidence type="ECO:0000269" key="3">
    <source>
    </source>
</evidence>
<evidence type="ECO:0000303" key="4">
    <source>
    </source>
</evidence>
<evidence type="ECO:0000305" key="5"/>
<evidence type="ECO:0000312" key="6">
    <source>
        <dbReference type="EMBL" id="EPT27110.1"/>
    </source>
</evidence>
<evidence type="ECO:0000312" key="7">
    <source>
        <dbReference type="Proteomes" id="UP000001529"/>
    </source>
</evidence>
<name>AAT1_TOXGM</name>